<name>TBGN_GUITH</name>
<evidence type="ECO:0000255" key="1"/>
<evidence type="ECO:0000305" key="2"/>
<comment type="function">
    <text>Tubulin is the major constituent of microtubules. The gamma chain is found at microtubule organizing centers (MTOC) such as the spindle poles or the centrosome, suggesting that it is involved in the minus-end nucleation of microtubule assembly.</text>
</comment>
<comment type="similarity">
    <text evidence="2">Belongs to the tubulin family.</text>
</comment>
<keyword id="KW-0342">GTP-binding</keyword>
<keyword id="KW-0493">Microtubule</keyword>
<keyword id="KW-0547">Nucleotide-binding</keyword>
<proteinExistence type="inferred from homology"/>
<dbReference type="EMBL" id="AF165818">
    <property type="protein sequence ID" value="AAF24212.4"/>
    <property type="molecule type" value="Genomic_DNA"/>
</dbReference>
<dbReference type="EMBL" id="AF119171">
    <property type="protein sequence ID" value="AAD55352.1"/>
    <property type="molecule type" value="Genomic_DNA"/>
</dbReference>
<dbReference type="PIR" id="B90083">
    <property type="entry name" value="B90083"/>
</dbReference>
<dbReference type="RefSeq" id="XP_001713502.1">
    <property type="nucleotide sequence ID" value="XM_001713450.1"/>
</dbReference>
<dbReference type="SMR" id="Q9SEA4"/>
<dbReference type="GeneID" id="857285"/>
<dbReference type="Proteomes" id="UP000242167">
    <property type="component" value="Chromosome 1"/>
</dbReference>
<dbReference type="GO" id="GO:0005874">
    <property type="term" value="C:microtubule"/>
    <property type="evidence" value="ECO:0007669"/>
    <property type="project" value="UniProtKB-KW"/>
</dbReference>
<dbReference type="GO" id="GO:0005525">
    <property type="term" value="F:GTP binding"/>
    <property type="evidence" value="ECO:0007669"/>
    <property type="project" value="UniProtKB-KW"/>
</dbReference>
<dbReference type="GO" id="GO:0007017">
    <property type="term" value="P:microtubule-based process"/>
    <property type="evidence" value="ECO:0007669"/>
    <property type="project" value="InterPro"/>
</dbReference>
<dbReference type="Gene3D" id="1.10.287.600">
    <property type="entry name" value="Helix hairpin bin"/>
    <property type="match status" value="1"/>
</dbReference>
<dbReference type="Gene3D" id="3.40.50.1440">
    <property type="entry name" value="Tubulin/FtsZ, GTPase domain"/>
    <property type="match status" value="1"/>
</dbReference>
<dbReference type="InterPro" id="IPR008280">
    <property type="entry name" value="Tub_FtsZ_C"/>
</dbReference>
<dbReference type="InterPro" id="IPR000217">
    <property type="entry name" value="Tubulin"/>
</dbReference>
<dbReference type="InterPro" id="IPR036525">
    <property type="entry name" value="Tubulin/FtsZ_GTPase_sf"/>
</dbReference>
<dbReference type="InterPro" id="IPR023123">
    <property type="entry name" value="Tubulin_C"/>
</dbReference>
<dbReference type="InterPro" id="IPR003008">
    <property type="entry name" value="Tubulin_FtsZ_GTPase"/>
</dbReference>
<dbReference type="PANTHER" id="PTHR11588">
    <property type="entry name" value="TUBULIN"/>
    <property type="match status" value="1"/>
</dbReference>
<dbReference type="Pfam" id="PF00091">
    <property type="entry name" value="Tubulin"/>
    <property type="match status" value="1"/>
</dbReference>
<dbReference type="PRINTS" id="PR01161">
    <property type="entry name" value="TUBULIN"/>
</dbReference>
<dbReference type="SMART" id="SM00864">
    <property type="entry name" value="Tubulin"/>
    <property type="match status" value="1"/>
</dbReference>
<dbReference type="SUPFAM" id="SSF55307">
    <property type="entry name" value="Tubulin C-terminal domain-like"/>
    <property type="match status" value="1"/>
</dbReference>
<dbReference type="SUPFAM" id="SSF52490">
    <property type="entry name" value="Tubulin nucleotide-binding domain-like"/>
    <property type="match status" value="1"/>
</dbReference>
<accession>Q9SEA4</accession>
<accession>Q9SQ06</accession>
<feature type="chain" id="PRO_0000233350" description="Tubulin gamma chain, nucleomorph">
    <location>
        <begin position="1"/>
        <end position="424"/>
    </location>
</feature>
<feature type="binding site" evidence="1">
    <location>
        <begin position="137"/>
        <end position="143"/>
    </location>
    <ligand>
        <name>GTP</name>
        <dbReference type="ChEBI" id="CHEBI:37565"/>
    </ligand>
</feature>
<organism>
    <name type="scientific">Guillardia theta</name>
    <name type="common">Cryptophyte</name>
    <name type="synonym">Cryptomonas phi</name>
    <dbReference type="NCBI Taxonomy" id="55529"/>
    <lineage>
        <taxon>Eukaryota</taxon>
        <taxon>Cryptophyceae</taxon>
        <taxon>Pyrenomonadales</taxon>
        <taxon>Geminigeraceae</taxon>
        <taxon>Guillardia</taxon>
    </lineage>
</organism>
<sequence length="424" mass="49665">MNNEILTLQVGKTGILTGNEFWKSLVREKNLLSDFSLGKNSPTNDNVFFEESNESFFIPRTIIFDLSERDFNYIMKSNYSKMYDKNRHFILNKNTGNSWLKGYYEGISNCNLVDNILRKRIEKMNSVKYFNVFNSINGGTGAGLSSYLIEYIRNNYPKSFINCCSIFPDLYGNTQVTFQPYNSVLSIAWQGLYCDSNIFFQNHAIENLLTKNQINNELSFRKVNYIIGKTISIIMNTLNHNFTLETLISPLIVNPYLNLFFSTINIDILLSKLRKKRPSMIENKTNQLNEISMNLDLKSGNYLSSIELSNRNFYKLFANSIYDKIFYDQTRFYSQLLNQYDSVIINNNVKKENYSSLTYLLNHTSFNPVIKKIIQNFELLKKRNAFLEYYCGEILLDEANTLFRESKDYILDIINNYDNILSYY</sequence>
<gene>
    <name type="primary">tubG</name>
    <name type="synonym">gtubNM</name>
</gene>
<reference key="1">
    <citation type="journal article" date="2001" name="Nature">
        <title>The highly reduced genome of an enslaved algal nucleus.</title>
        <authorList>
            <person name="Douglas S.E."/>
            <person name="Zauner S."/>
            <person name="Fraunholz M."/>
            <person name="Beaton M."/>
            <person name="Penny S.L."/>
            <person name="Deng L.-T."/>
            <person name="Wu X."/>
            <person name="Reith M.E."/>
            <person name="Cavalier-Smith T."/>
            <person name="Maier U.-G."/>
        </authorList>
    </citation>
    <scope>NUCLEOTIDE SEQUENCE [LARGE SCALE GENOMIC DNA]</scope>
</reference>
<reference key="2">
    <citation type="journal article" date="1999" name="Mol. Biol. Evol.">
        <title>The secondary endosymbiont of the cryptomonad Guillardia theta contains alpha-, beta-, and gamma-tubulin genes.</title>
        <authorList>
            <person name="Keeling P.J."/>
            <person name="Deane J.A."/>
            <person name="Hink-Schauer C."/>
            <person name="Douglas S.E."/>
            <person name="Maier U.-G."/>
            <person name="McFadden G.I."/>
        </authorList>
    </citation>
    <scope>NUCLEOTIDE SEQUENCE [GENOMIC DNA] OF 1-411</scope>
</reference>
<protein>
    <recommendedName>
        <fullName>Tubulin gamma chain, nucleomorph</fullName>
    </recommendedName>
    <alternativeName>
        <fullName>Nucleomorph gamma-tubulin</fullName>
    </alternativeName>
</protein>
<geneLocation type="nucleomorph"/>